<dbReference type="EMBL" id="L77117">
    <property type="protein sequence ID" value="AAB98759.1"/>
    <property type="molecule type" value="Genomic_DNA"/>
</dbReference>
<dbReference type="PIR" id="C64395">
    <property type="entry name" value="C64395"/>
</dbReference>
<dbReference type="RefSeq" id="WP_010870268.1">
    <property type="nucleotide sequence ID" value="NC_000909.1"/>
</dbReference>
<dbReference type="SMR" id="Q58173"/>
<dbReference type="STRING" id="243232.MJ_0763"/>
<dbReference type="PaxDb" id="243232-MJ_0763"/>
<dbReference type="EnsemblBacteria" id="AAB98759">
    <property type="protein sequence ID" value="AAB98759"/>
    <property type="gene ID" value="MJ_0763"/>
</dbReference>
<dbReference type="GeneID" id="1451640"/>
<dbReference type="KEGG" id="mja:MJ_0763"/>
<dbReference type="eggNOG" id="arCOG08263">
    <property type="taxonomic scope" value="Archaea"/>
</dbReference>
<dbReference type="HOGENOM" id="CLU_1976528_0_0_2"/>
<dbReference type="InParanoid" id="Q58173"/>
<dbReference type="OrthoDB" id="65694at2157"/>
<dbReference type="Proteomes" id="UP000000805">
    <property type="component" value="Chromosome"/>
</dbReference>
<protein>
    <recommendedName>
        <fullName>Uncharacterized protein MJ0763</fullName>
    </recommendedName>
</protein>
<reference key="1">
    <citation type="journal article" date="1996" name="Science">
        <title>Complete genome sequence of the methanogenic archaeon, Methanococcus jannaschii.</title>
        <authorList>
            <person name="Bult C.J."/>
            <person name="White O."/>
            <person name="Olsen G.J."/>
            <person name="Zhou L."/>
            <person name="Fleischmann R.D."/>
            <person name="Sutton G.G."/>
            <person name="Blake J.A."/>
            <person name="FitzGerald L.M."/>
            <person name="Clayton R.A."/>
            <person name="Gocayne J.D."/>
            <person name="Kerlavage A.R."/>
            <person name="Dougherty B.A."/>
            <person name="Tomb J.-F."/>
            <person name="Adams M.D."/>
            <person name="Reich C.I."/>
            <person name="Overbeek R."/>
            <person name="Kirkness E.F."/>
            <person name="Weinstock K.G."/>
            <person name="Merrick J.M."/>
            <person name="Glodek A."/>
            <person name="Scott J.L."/>
            <person name="Geoghagen N.S.M."/>
            <person name="Weidman J.F."/>
            <person name="Fuhrmann J.L."/>
            <person name="Nguyen D."/>
            <person name="Utterback T.R."/>
            <person name="Kelley J.M."/>
            <person name="Peterson J.D."/>
            <person name="Sadow P.W."/>
            <person name="Hanna M.C."/>
            <person name="Cotton M.D."/>
            <person name="Roberts K.M."/>
            <person name="Hurst M.A."/>
            <person name="Kaine B.P."/>
            <person name="Borodovsky M."/>
            <person name="Klenk H.-P."/>
            <person name="Fraser C.M."/>
            <person name="Smith H.O."/>
            <person name="Woese C.R."/>
            <person name="Venter J.C."/>
        </authorList>
    </citation>
    <scope>NUCLEOTIDE SEQUENCE [LARGE SCALE GENOMIC DNA]</scope>
    <source>
        <strain>ATCC 43067 / DSM 2661 / JAL-1 / JCM 10045 / NBRC 100440</strain>
    </source>
</reference>
<organism>
    <name type="scientific">Methanocaldococcus jannaschii (strain ATCC 43067 / DSM 2661 / JAL-1 / JCM 10045 / NBRC 100440)</name>
    <name type="common">Methanococcus jannaschii</name>
    <dbReference type="NCBI Taxonomy" id="243232"/>
    <lineage>
        <taxon>Archaea</taxon>
        <taxon>Methanobacteriati</taxon>
        <taxon>Methanobacteriota</taxon>
        <taxon>Methanomada group</taxon>
        <taxon>Methanococci</taxon>
        <taxon>Methanococcales</taxon>
        <taxon>Methanocaldococcaceae</taxon>
        <taxon>Methanocaldococcus</taxon>
    </lineage>
</organism>
<feature type="chain" id="PRO_0000107021" description="Uncharacterized protein MJ0763">
    <location>
        <begin position="1"/>
        <end position="121"/>
    </location>
</feature>
<proteinExistence type="predicted"/>
<accession>Q58173</accession>
<keyword id="KW-1185">Reference proteome</keyword>
<gene>
    <name type="ordered locus">MJ0763</name>
</gene>
<name>Y763_METJA</name>
<sequence>MDEIKEYLAKILENKIKISMIAKFKSVEEYEGRIFKDLFDVEMKNLEILYEKYLIYFNEKPNIKAEVDTNADVIEILKETIELEKFLAKKLGVNFGVRQAVIHALSDDERFLYFLTKKPYF</sequence>